<name>Y481_TREPA</name>
<dbReference type="EMBL" id="AE000520">
    <property type="protein sequence ID" value="AAC65470.1"/>
    <property type="molecule type" value="Genomic_DNA"/>
</dbReference>
<dbReference type="PIR" id="G71319">
    <property type="entry name" value="G71319"/>
</dbReference>
<dbReference type="RefSeq" id="WP_010881930.1">
    <property type="nucleotide sequence ID" value="NC_000919.1"/>
</dbReference>
<dbReference type="SMR" id="O83494"/>
<dbReference type="IntAct" id="O83494">
    <property type="interactions" value="4"/>
</dbReference>
<dbReference type="STRING" id="243276.TP_0481"/>
<dbReference type="EnsemblBacteria" id="AAC65470">
    <property type="protein sequence ID" value="AAC65470"/>
    <property type="gene ID" value="TP_0481"/>
</dbReference>
<dbReference type="KEGG" id="tpa:TP_0481"/>
<dbReference type="PATRIC" id="fig|243276.5.peg.513"/>
<dbReference type="eggNOG" id="COG2982">
    <property type="taxonomic scope" value="Bacteria"/>
</dbReference>
<dbReference type="HOGENOM" id="CLU_572289_0_0_12"/>
<dbReference type="OrthoDB" id="366311at2"/>
<dbReference type="Proteomes" id="UP000000811">
    <property type="component" value="Chromosome"/>
</dbReference>
<dbReference type="GO" id="GO:0016020">
    <property type="term" value="C:membrane"/>
    <property type="evidence" value="ECO:0007669"/>
    <property type="project" value="UniProtKB-SubCell"/>
</dbReference>
<proteinExistence type="predicted"/>
<sequence length="477" mass="53153">MSDDSTPKTPSRRIRHTGRRRTLHRFFCKRYTPRSLKRFLRRIHIPADRAYCMRYLADPVSTPVRVFGRTLLSRTYVRFDQQAIAHSADLKRLNAIAASIAKQRGRVNFWSLSMACASVLALLGLVYLIRNVIARRVVIGGSEAVFGARCEAAVVDLDLFNARFRLKNYAVANKHHPMWNLFEIESIDIHFDLLELSRGKFVSHTMVVEGVTWNTPRKTSGALPPRRAKRQRVRSSNPLIAKIQEKAAELAAPVSFGAGFSALKAQVDPRILLEREVKALKTPTLVQHVGAQAPKLAERWTQRVFDAHARAEKTVAAIRAVTELDFHALKDVSAIKQGIETLDRARRSTEEALATARTISHELQQDVHSTLGLAREFAAAVKADGARIARAAAAIRDIQADGGKKFISGLCTVFLARSFSHYYPYVAQMLDYVRGSQRTPSDGSPSAEAEKTAQSLTTRKRLQGVIFCLSATSLPCC</sequence>
<keyword id="KW-0472">Membrane</keyword>
<keyword id="KW-1185">Reference proteome</keyword>
<keyword id="KW-0812">Transmembrane</keyword>
<keyword id="KW-1133">Transmembrane helix</keyword>
<organism>
    <name type="scientific">Treponema pallidum (strain Nichols)</name>
    <dbReference type="NCBI Taxonomy" id="243276"/>
    <lineage>
        <taxon>Bacteria</taxon>
        <taxon>Pseudomonadati</taxon>
        <taxon>Spirochaetota</taxon>
        <taxon>Spirochaetia</taxon>
        <taxon>Spirochaetales</taxon>
        <taxon>Treponemataceae</taxon>
        <taxon>Treponema</taxon>
    </lineage>
</organism>
<accession>O83494</accession>
<feature type="chain" id="PRO_0000202263" description="Uncharacterized protein TP_0481">
    <location>
        <begin position="1"/>
        <end position="477"/>
    </location>
</feature>
<feature type="transmembrane region" description="Helical" evidence="1">
    <location>
        <begin position="107"/>
        <end position="129"/>
    </location>
</feature>
<reference key="1">
    <citation type="journal article" date="1998" name="Science">
        <title>Complete genome sequence of Treponema pallidum, the syphilis spirochete.</title>
        <authorList>
            <person name="Fraser C.M."/>
            <person name="Norris S.J."/>
            <person name="Weinstock G.M."/>
            <person name="White O."/>
            <person name="Sutton G.G."/>
            <person name="Dodson R.J."/>
            <person name="Gwinn M.L."/>
            <person name="Hickey E.K."/>
            <person name="Clayton R.A."/>
            <person name="Ketchum K.A."/>
            <person name="Sodergren E."/>
            <person name="Hardham J.M."/>
            <person name="McLeod M.P."/>
            <person name="Salzberg S.L."/>
            <person name="Peterson J.D."/>
            <person name="Khalak H.G."/>
            <person name="Richardson D.L."/>
            <person name="Howell J.K."/>
            <person name="Chidambaram M."/>
            <person name="Utterback T.R."/>
            <person name="McDonald L.A."/>
            <person name="Artiach P."/>
            <person name="Bowman C."/>
            <person name="Cotton M.D."/>
            <person name="Fujii C."/>
            <person name="Garland S.A."/>
            <person name="Hatch B."/>
            <person name="Horst K."/>
            <person name="Roberts K.M."/>
            <person name="Sandusky M."/>
            <person name="Weidman J.F."/>
            <person name="Smith H.O."/>
            <person name="Venter J.C."/>
        </authorList>
    </citation>
    <scope>NUCLEOTIDE SEQUENCE [LARGE SCALE GENOMIC DNA]</scope>
    <source>
        <strain>Nichols</strain>
    </source>
</reference>
<comment type="subcellular location">
    <subcellularLocation>
        <location evidence="2">Membrane</location>
        <topology evidence="2">Single-pass membrane protein</topology>
    </subcellularLocation>
</comment>
<protein>
    <recommendedName>
        <fullName>Uncharacterized protein TP_0481</fullName>
    </recommendedName>
</protein>
<evidence type="ECO:0000255" key="1"/>
<evidence type="ECO:0000305" key="2"/>
<gene>
    <name type="ordered locus">TP_0481</name>
</gene>